<feature type="signal peptide" evidence="2">
    <location>
        <begin position="1"/>
        <end position="33"/>
    </location>
</feature>
<feature type="chain" id="PRO_0000032806" description="Protein Smp">
    <location>
        <begin position="34"/>
        <end position="233"/>
    </location>
</feature>
<feature type="transmembrane region" description="Helical" evidence="2">
    <location>
        <begin position="166"/>
        <end position="186"/>
    </location>
</feature>
<feature type="region of interest" description="Disordered" evidence="3">
    <location>
        <begin position="204"/>
        <end position="233"/>
    </location>
</feature>
<feature type="compositionally biased region" description="Acidic residues" evidence="3">
    <location>
        <begin position="208"/>
        <end position="217"/>
    </location>
</feature>
<comment type="subcellular location">
    <subcellularLocation>
        <location evidence="1">Cell membrane</location>
        <topology evidence="1">Single-pass membrane protein</topology>
    </subcellularLocation>
</comment>
<comment type="similarity">
    <text evidence="4">Belongs to the Smp family.</text>
</comment>
<evidence type="ECO:0000250" key="1"/>
<evidence type="ECO:0000255" key="2"/>
<evidence type="ECO:0000256" key="3">
    <source>
        <dbReference type="SAM" id="MobiDB-lite"/>
    </source>
</evidence>
<evidence type="ECO:0000305" key="4"/>
<keyword id="KW-1003">Cell membrane</keyword>
<keyword id="KW-0472">Membrane</keyword>
<keyword id="KW-1185">Reference proteome</keyword>
<keyword id="KW-0732">Signal</keyword>
<keyword id="KW-0812">Transmembrane</keyword>
<keyword id="KW-1133">Transmembrane helix</keyword>
<protein>
    <recommendedName>
        <fullName>Protein Smp</fullName>
    </recommendedName>
</protein>
<gene>
    <name type="primary">smp</name>
    <name type="ordered locus">YPO0441</name>
    <name type="ordered locus">y3739</name>
    <name type="ordered locus">YP_3741</name>
</gene>
<organism>
    <name type="scientific">Yersinia pestis</name>
    <dbReference type="NCBI Taxonomy" id="632"/>
    <lineage>
        <taxon>Bacteria</taxon>
        <taxon>Pseudomonadati</taxon>
        <taxon>Pseudomonadota</taxon>
        <taxon>Gammaproteobacteria</taxon>
        <taxon>Enterobacterales</taxon>
        <taxon>Yersiniaceae</taxon>
        <taxon>Yersinia</taxon>
    </lineage>
</organism>
<proteinExistence type="inferred from homology"/>
<sequence length="233" mass="25636">MARAKLKFRLHRTAIVLICLALLVLLMQGASYFSLSHQLARSEQVEELAQTLAKQVAFSLSPIMDSGDDNIDSQKVDAILQQLTQSSRILDASVYQIDGTLVASAGENVKVRDRLALDGKRPGSYFNHQIVEMIAGNSGPSGFLRMTLDTHVLATESKQVDNTTNLLRLMILVALAVGIILARTLLQGRRSRWQQSPYLLTANIPVKEEDESEDDTPEALVGQAETDHKPADK</sequence>
<dbReference type="EMBL" id="AL590842">
    <property type="protein sequence ID" value="CAL19121.1"/>
    <property type="molecule type" value="Genomic_DNA"/>
</dbReference>
<dbReference type="EMBL" id="AE009952">
    <property type="protein sequence ID" value="AAM87285.1"/>
    <property type="molecule type" value="Genomic_DNA"/>
</dbReference>
<dbReference type="EMBL" id="AE017042">
    <property type="protein sequence ID" value="AAS63889.1"/>
    <property type="molecule type" value="Genomic_DNA"/>
</dbReference>
<dbReference type="PIR" id="AG0054">
    <property type="entry name" value="AG0054"/>
</dbReference>
<dbReference type="RefSeq" id="WP_002209218.1">
    <property type="nucleotide sequence ID" value="NZ_WUCM01000002.1"/>
</dbReference>
<dbReference type="RefSeq" id="YP_002345515.1">
    <property type="nucleotide sequence ID" value="NC_003143.1"/>
</dbReference>
<dbReference type="SMR" id="Q8ZIQ1"/>
<dbReference type="STRING" id="214092.YPO0441"/>
<dbReference type="PaxDb" id="214092-YPO0441"/>
<dbReference type="DNASU" id="1148686"/>
<dbReference type="EnsemblBacteria" id="AAS63889">
    <property type="protein sequence ID" value="AAS63889"/>
    <property type="gene ID" value="YP_3741"/>
</dbReference>
<dbReference type="KEGG" id="ype:YPO0441"/>
<dbReference type="KEGG" id="ypk:y3739"/>
<dbReference type="KEGG" id="ypm:YP_3741"/>
<dbReference type="PATRIC" id="fig|214092.21.peg.685"/>
<dbReference type="eggNOG" id="COG3726">
    <property type="taxonomic scope" value="Bacteria"/>
</dbReference>
<dbReference type="HOGENOM" id="CLU_093836_0_0_6"/>
<dbReference type="OMA" id="RQVDNTT"/>
<dbReference type="OrthoDB" id="6506836at2"/>
<dbReference type="Proteomes" id="UP000000815">
    <property type="component" value="Chromosome"/>
</dbReference>
<dbReference type="Proteomes" id="UP000001019">
    <property type="component" value="Chromosome"/>
</dbReference>
<dbReference type="Proteomes" id="UP000002490">
    <property type="component" value="Chromosome"/>
</dbReference>
<dbReference type="GO" id="GO:0005886">
    <property type="term" value="C:plasma membrane"/>
    <property type="evidence" value="ECO:0007669"/>
    <property type="project" value="UniProtKB-SubCell"/>
</dbReference>
<dbReference type="InterPro" id="IPR019305">
    <property type="entry name" value="Uncharacterised_Smp"/>
</dbReference>
<dbReference type="NCBIfam" id="NF008419">
    <property type="entry name" value="PRK11246.1"/>
    <property type="match status" value="1"/>
</dbReference>
<dbReference type="Pfam" id="PF10144">
    <property type="entry name" value="SMP_2"/>
    <property type="match status" value="1"/>
</dbReference>
<reference key="1">
    <citation type="journal article" date="2001" name="Nature">
        <title>Genome sequence of Yersinia pestis, the causative agent of plague.</title>
        <authorList>
            <person name="Parkhill J."/>
            <person name="Wren B.W."/>
            <person name="Thomson N.R."/>
            <person name="Titball R.W."/>
            <person name="Holden M.T.G."/>
            <person name="Prentice M.B."/>
            <person name="Sebaihia M."/>
            <person name="James K.D."/>
            <person name="Churcher C.M."/>
            <person name="Mungall K.L."/>
            <person name="Baker S."/>
            <person name="Basham D."/>
            <person name="Bentley S.D."/>
            <person name="Brooks K."/>
            <person name="Cerdeno-Tarraga A.-M."/>
            <person name="Chillingworth T."/>
            <person name="Cronin A."/>
            <person name="Davies R.M."/>
            <person name="Davis P."/>
            <person name="Dougan G."/>
            <person name="Feltwell T."/>
            <person name="Hamlin N."/>
            <person name="Holroyd S."/>
            <person name="Jagels K."/>
            <person name="Karlyshev A.V."/>
            <person name="Leather S."/>
            <person name="Moule S."/>
            <person name="Oyston P.C.F."/>
            <person name="Quail M.A."/>
            <person name="Rutherford K.M."/>
            <person name="Simmonds M."/>
            <person name="Skelton J."/>
            <person name="Stevens K."/>
            <person name="Whitehead S."/>
            <person name="Barrell B.G."/>
        </authorList>
    </citation>
    <scope>NUCLEOTIDE SEQUENCE [LARGE SCALE GENOMIC DNA]</scope>
    <source>
        <strain>CO-92 / Biovar Orientalis</strain>
    </source>
</reference>
<reference key="2">
    <citation type="journal article" date="2002" name="J. Bacteriol.">
        <title>Genome sequence of Yersinia pestis KIM.</title>
        <authorList>
            <person name="Deng W."/>
            <person name="Burland V."/>
            <person name="Plunkett G. III"/>
            <person name="Boutin A."/>
            <person name="Mayhew G.F."/>
            <person name="Liss P."/>
            <person name="Perna N.T."/>
            <person name="Rose D.J."/>
            <person name="Mau B."/>
            <person name="Zhou S."/>
            <person name="Schwartz D.C."/>
            <person name="Fetherston J.D."/>
            <person name="Lindler L.E."/>
            <person name="Brubaker R.R."/>
            <person name="Plano G.V."/>
            <person name="Straley S.C."/>
            <person name="McDonough K.A."/>
            <person name="Nilles M.L."/>
            <person name="Matson J.S."/>
            <person name="Blattner F.R."/>
            <person name="Perry R.D."/>
        </authorList>
    </citation>
    <scope>NUCLEOTIDE SEQUENCE [LARGE SCALE GENOMIC DNA]</scope>
    <source>
        <strain>KIM10+ / Biovar Mediaevalis</strain>
    </source>
</reference>
<reference key="3">
    <citation type="journal article" date="2004" name="DNA Res.">
        <title>Complete genome sequence of Yersinia pestis strain 91001, an isolate avirulent to humans.</title>
        <authorList>
            <person name="Song Y."/>
            <person name="Tong Z."/>
            <person name="Wang J."/>
            <person name="Wang L."/>
            <person name="Guo Z."/>
            <person name="Han Y."/>
            <person name="Zhang J."/>
            <person name="Pei D."/>
            <person name="Zhou D."/>
            <person name="Qin H."/>
            <person name="Pang X."/>
            <person name="Han Y."/>
            <person name="Zhai J."/>
            <person name="Li M."/>
            <person name="Cui B."/>
            <person name="Qi Z."/>
            <person name="Jin L."/>
            <person name="Dai R."/>
            <person name="Chen F."/>
            <person name="Li S."/>
            <person name="Ye C."/>
            <person name="Du Z."/>
            <person name="Lin W."/>
            <person name="Wang J."/>
            <person name="Yu J."/>
            <person name="Yang H."/>
            <person name="Wang J."/>
            <person name="Huang P."/>
            <person name="Yang R."/>
        </authorList>
    </citation>
    <scope>NUCLEOTIDE SEQUENCE [LARGE SCALE GENOMIC DNA]</scope>
    <source>
        <strain>91001 / Biovar Mediaevalis</strain>
    </source>
</reference>
<accession>Q8ZIQ1</accession>
<accession>Q0WJM3</accession>
<name>SMP_YERPE</name>